<evidence type="ECO:0000255" key="1">
    <source>
        <dbReference type="HAMAP-Rule" id="MF_01702"/>
    </source>
</evidence>
<dbReference type="EC" id="7.3.2.1" evidence="1"/>
<dbReference type="EMBL" id="CP000240">
    <property type="protein sequence ID" value="ABD02867.1"/>
    <property type="molecule type" value="Genomic_DNA"/>
</dbReference>
<dbReference type="SMR" id="Q2JKC2"/>
<dbReference type="STRING" id="321332.CYB_1912"/>
<dbReference type="KEGG" id="cyb:CYB_1912"/>
<dbReference type="eggNOG" id="COG1117">
    <property type="taxonomic scope" value="Bacteria"/>
</dbReference>
<dbReference type="HOGENOM" id="CLU_000604_1_22_3"/>
<dbReference type="OrthoDB" id="9802185at2"/>
<dbReference type="Proteomes" id="UP000001938">
    <property type="component" value="Chromosome"/>
</dbReference>
<dbReference type="GO" id="GO:0005886">
    <property type="term" value="C:plasma membrane"/>
    <property type="evidence" value="ECO:0007669"/>
    <property type="project" value="UniProtKB-SubCell"/>
</dbReference>
<dbReference type="GO" id="GO:0005524">
    <property type="term" value="F:ATP binding"/>
    <property type="evidence" value="ECO:0007669"/>
    <property type="project" value="UniProtKB-KW"/>
</dbReference>
<dbReference type="GO" id="GO:0016887">
    <property type="term" value="F:ATP hydrolysis activity"/>
    <property type="evidence" value="ECO:0007669"/>
    <property type="project" value="InterPro"/>
</dbReference>
<dbReference type="GO" id="GO:0015415">
    <property type="term" value="F:ATPase-coupled phosphate ion transmembrane transporter activity"/>
    <property type="evidence" value="ECO:0007669"/>
    <property type="project" value="UniProtKB-EC"/>
</dbReference>
<dbReference type="GO" id="GO:0035435">
    <property type="term" value="P:phosphate ion transmembrane transport"/>
    <property type="evidence" value="ECO:0007669"/>
    <property type="project" value="InterPro"/>
</dbReference>
<dbReference type="CDD" id="cd03260">
    <property type="entry name" value="ABC_PstB_phosphate_transporter"/>
    <property type="match status" value="1"/>
</dbReference>
<dbReference type="Gene3D" id="3.40.50.300">
    <property type="entry name" value="P-loop containing nucleotide triphosphate hydrolases"/>
    <property type="match status" value="1"/>
</dbReference>
<dbReference type="InterPro" id="IPR003593">
    <property type="entry name" value="AAA+_ATPase"/>
</dbReference>
<dbReference type="InterPro" id="IPR003439">
    <property type="entry name" value="ABC_transporter-like_ATP-bd"/>
</dbReference>
<dbReference type="InterPro" id="IPR017871">
    <property type="entry name" value="ABC_transporter-like_CS"/>
</dbReference>
<dbReference type="InterPro" id="IPR027417">
    <property type="entry name" value="P-loop_NTPase"/>
</dbReference>
<dbReference type="InterPro" id="IPR005670">
    <property type="entry name" value="PstB-like"/>
</dbReference>
<dbReference type="NCBIfam" id="TIGR00972">
    <property type="entry name" value="3a0107s01c2"/>
    <property type="match status" value="1"/>
</dbReference>
<dbReference type="PANTHER" id="PTHR43423">
    <property type="entry name" value="ABC TRANSPORTER I FAMILY MEMBER 17"/>
    <property type="match status" value="1"/>
</dbReference>
<dbReference type="PANTHER" id="PTHR43423:SF1">
    <property type="entry name" value="ABC TRANSPORTER I FAMILY MEMBER 17"/>
    <property type="match status" value="1"/>
</dbReference>
<dbReference type="Pfam" id="PF00005">
    <property type="entry name" value="ABC_tran"/>
    <property type="match status" value="1"/>
</dbReference>
<dbReference type="SMART" id="SM00382">
    <property type="entry name" value="AAA"/>
    <property type="match status" value="1"/>
</dbReference>
<dbReference type="SUPFAM" id="SSF52540">
    <property type="entry name" value="P-loop containing nucleoside triphosphate hydrolases"/>
    <property type="match status" value="1"/>
</dbReference>
<dbReference type="PROSITE" id="PS00211">
    <property type="entry name" value="ABC_TRANSPORTER_1"/>
    <property type="match status" value="1"/>
</dbReference>
<dbReference type="PROSITE" id="PS50893">
    <property type="entry name" value="ABC_TRANSPORTER_2"/>
    <property type="match status" value="1"/>
</dbReference>
<dbReference type="PROSITE" id="PS51238">
    <property type="entry name" value="PSTB"/>
    <property type="match status" value="1"/>
</dbReference>
<comment type="function">
    <text evidence="1">Part of the ABC transporter complex PstSACB involved in phosphate import. Responsible for energy coupling to the transport system.</text>
</comment>
<comment type="catalytic activity">
    <reaction evidence="1">
        <text>phosphate(out) + ATP + H2O = ADP + 2 phosphate(in) + H(+)</text>
        <dbReference type="Rhea" id="RHEA:24440"/>
        <dbReference type="ChEBI" id="CHEBI:15377"/>
        <dbReference type="ChEBI" id="CHEBI:15378"/>
        <dbReference type="ChEBI" id="CHEBI:30616"/>
        <dbReference type="ChEBI" id="CHEBI:43474"/>
        <dbReference type="ChEBI" id="CHEBI:456216"/>
        <dbReference type="EC" id="7.3.2.1"/>
    </reaction>
</comment>
<comment type="subunit">
    <text evidence="1">The complex is composed of two ATP-binding proteins (PstB), two transmembrane proteins (PstC and PstA) and a solute-binding protein (PstS).</text>
</comment>
<comment type="subcellular location">
    <subcellularLocation>
        <location evidence="1">Cell inner membrane</location>
        <topology evidence="1">Peripheral membrane protein</topology>
    </subcellularLocation>
</comment>
<comment type="similarity">
    <text evidence="1">Belongs to the ABC transporter superfamily. Phosphate importer (TC 3.A.1.7) family.</text>
</comment>
<keyword id="KW-0067">ATP-binding</keyword>
<keyword id="KW-0997">Cell inner membrane</keyword>
<keyword id="KW-1003">Cell membrane</keyword>
<keyword id="KW-0472">Membrane</keyword>
<keyword id="KW-0547">Nucleotide-binding</keyword>
<keyword id="KW-0592">Phosphate transport</keyword>
<keyword id="KW-1185">Reference proteome</keyword>
<keyword id="KW-1278">Translocase</keyword>
<keyword id="KW-0813">Transport</keyword>
<reference key="1">
    <citation type="journal article" date="2007" name="ISME J.">
        <title>Population level functional diversity in a microbial community revealed by comparative genomic and metagenomic analyses.</title>
        <authorList>
            <person name="Bhaya D."/>
            <person name="Grossman A.R."/>
            <person name="Steunou A.-S."/>
            <person name="Khuri N."/>
            <person name="Cohan F.M."/>
            <person name="Hamamura N."/>
            <person name="Melendrez M.C."/>
            <person name="Bateson M.M."/>
            <person name="Ward D.M."/>
            <person name="Heidelberg J.F."/>
        </authorList>
    </citation>
    <scope>NUCLEOTIDE SEQUENCE [LARGE SCALE GENOMIC DNA]</scope>
    <source>
        <strain>JA-2-3B'a(2-13)</strain>
    </source>
</reference>
<protein>
    <recommendedName>
        <fullName evidence="1">Phosphate import ATP-binding protein PstB 2</fullName>
        <ecNumber evidence="1">7.3.2.1</ecNumber>
    </recommendedName>
    <alternativeName>
        <fullName evidence="1">ABC phosphate transporter 2</fullName>
    </alternativeName>
    <alternativeName>
        <fullName evidence="1">Phosphate-transporting ATPase 2</fullName>
    </alternativeName>
</protein>
<sequence length="265" mass="29831">MQTQSLNQTSYVFRTENLNVYYGSNLAVKNVTLDIPARQITAFIGPSGCGKSTILRCFNRTNDLIPGARVEGKLTYHGKDLYAKEVDPVAVRRRIGMVFQRPNPFPKSIYDNVAYGPRVLGMKVDLDEVVETSLKRAALWDEVKDKLKENGQSLSGGQQQRLCIARALAVQPDVILMDEPCSALDPISTRRIEELMKELEEEYTIIIVTHNMQQASRVSDMTAFFSVELVGSNRVGELIEFDRTEVIFNSPTKQATRDYVEGRFG</sequence>
<feature type="chain" id="PRO_0000272560" description="Phosphate import ATP-binding protein PstB 2">
    <location>
        <begin position="1"/>
        <end position="265"/>
    </location>
</feature>
<feature type="domain" description="ABC transporter" evidence="1">
    <location>
        <begin position="13"/>
        <end position="260"/>
    </location>
</feature>
<feature type="binding site" evidence="1">
    <location>
        <begin position="45"/>
        <end position="52"/>
    </location>
    <ligand>
        <name>ATP</name>
        <dbReference type="ChEBI" id="CHEBI:30616"/>
    </ligand>
</feature>
<organism>
    <name type="scientific">Synechococcus sp. (strain JA-2-3B'a(2-13))</name>
    <name type="common">Cyanobacteria bacterium Yellowstone B-Prime</name>
    <dbReference type="NCBI Taxonomy" id="321332"/>
    <lineage>
        <taxon>Bacteria</taxon>
        <taxon>Bacillati</taxon>
        <taxon>Cyanobacteriota</taxon>
        <taxon>Cyanophyceae</taxon>
        <taxon>Synechococcales</taxon>
        <taxon>Synechococcaceae</taxon>
        <taxon>Synechococcus</taxon>
    </lineage>
</organism>
<accession>Q2JKC2</accession>
<gene>
    <name evidence="1" type="primary">pstB2</name>
    <name type="synonym">pstB-2</name>
    <name type="ordered locus">CYB_1912</name>
</gene>
<proteinExistence type="inferred from homology"/>
<name>PSTB2_SYNJB</name>